<dbReference type="EC" id="2.8.1.12" evidence="1"/>
<dbReference type="EMBL" id="DS231621">
    <property type="protein sequence ID" value="EDU50046.1"/>
    <property type="molecule type" value="Genomic_DNA"/>
</dbReference>
<dbReference type="RefSeq" id="XP_001937459.1">
    <property type="nucleotide sequence ID" value="XM_001937424.1"/>
</dbReference>
<dbReference type="SMR" id="B2WBW4"/>
<dbReference type="STRING" id="426418.B2WBW4"/>
<dbReference type="EnsemblFungi" id="EDU50046">
    <property type="protein sequence ID" value="EDU50046"/>
    <property type="gene ID" value="PTRG_07127"/>
</dbReference>
<dbReference type="eggNOG" id="KOG3307">
    <property type="taxonomic scope" value="Eukaryota"/>
</dbReference>
<dbReference type="HOGENOM" id="CLU_089568_3_1_1"/>
<dbReference type="InParanoid" id="B2WBW4"/>
<dbReference type="OMA" id="WKREEFG"/>
<dbReference type="OrthoDB" id="7934at28556"/>
<dbReference type="UniPathway" id="UPA00344"/>
<dbReference type="Proteomes" id="UP000001471">
    <property type="component" value="Unassembled WGS sequence"/>
</dbReference>
<dbReference type="GO" id="GO:1990140">
    <property type="term" value="C:molybdopterin synthase complex"/>
    <property type="evidence" value="ECO:0000250"/>
    <property type="project" value="UniProtKB"/>
</dbReference>
<dbReference type="GO" id="GO:0030366">
    <property type="term" value="F:molybdopterin synthase activity"/>
    <property type="evidence" value="ECO:0007669"/>
    <property type="project" value="UniProtKB-UniRule"/>
</dbReference>
<dbReference type="GO" id="GO:0006777">
    <property type="term" value="P:Mo-molybdopterin cofactor biosynthetic process"/>
    <property type="evidence" value="ECO:0000250"/>
    <property type="project" value="UniProtKB"/>
</dbReference>
<dbReference type="CDD" id="cd00756">
    <property type="entry name" value="MoaE"/>
    <property type="match status" value="1"/>
</dbReference>
<dbReference type="FunFam" id="3.90.1170.40:FF:000003">
    <property type="entry name" value="Molybdopterin converting factor subunit 2"/>
    <property type="match status" value="1"/>
</dbReference>
<dbReference type="Gene3D" id="3.90.1170.40">
    <property type="entry name" value="Molybdopterin biosynthesis MoaE subunit"/>
    <property type="match status" value="1"/>
</dbReference>
<dbReference type="HAMAP" id="MF_03052">
    <property type="entry name" value="MOC2B"/>
    <property type="match status" value="1"/>
</dbReference>
<dbReference type="InterPro" id="IPR036563">
    <property type="entry name" value="MoaE_sf"/>
</dbReference>
<dbReference type="InterPro" id="IPR028888">
    <property type="entry name" value="MOCS2B_euk"/>
</dbReference>
<dbReference type="InterPro" id="IPR003448">
    <property type="entry name" value="Mopterin_biosynth_MoaE"/>
</dbReference>
<dbReference type="PANTHER" id="PTHR23404">
    <property type="entry name" value="MOLYBDOPTERIN SYNTHASE RELATED"/>
    <property type="match status" value="1"/>
</dbReference>
<dbReference type="Pfam" id="PF02391">
    <property type="entry name" value="MoaE"/>
    <property type="match status" value="1"/>
</dbReference>
<dbReference type="SUPFAM" id="SSF54690">
    <property type="entry name" value="Molybdopterin synthase subunit MoaE"/>
    <property type="match status" value="1"/>
</dbReference>
<protein>
    <recommendedName>
        <fullName evidence="1">Molybdopterin synthase catalytic subunit</fullName>
        <ecNumber evidence="1">2.8.1.12</ecNumber>
    </recommendedName>
    <alternativeName>
        <fullName evidence="1">Common component for nitrate reductase and xanthine dehydrogenase protein H</fullName>
    </alternativeName>
    <alternativeName>
        <fullName evidence="1">Molybdenum cofactor synthesis protein 2 large subunit</fullName>
    </alternativeName>
    <alternativeName>
        <fullName evidence="1">Molybdenum cofactor synthesis protein 2B</fullName>
        <shortName evidence="1">MOCS2B</shortName>
    </alternativeName>
</protein>
<comment type="function">
    <text evidence="1">Catalytic subunit of the molybdopterin synthase complex, a complex that catalyzes the conversion of precursor Z into molybdopterin. Acts by mediating the incorporation of 2 sulfur atoms from thiocarboxylated MOCS2A into precursor Z to generate a dithiolene group.</text>
</comment>
<comment type="catalytic activity">
    <reaction evidence="1">
        <text>2 [molybdopterin-synthase sulfur-carrier protein]-C-terminal-Gly-aminoethanethioate + cyclic pyranopterin phosphate + H2O = molybdopterin + 2 [molybdopterin-synthase sulfur-carrier protein]-C-terminal Gly-Gly + 2 H(+)</text>
        <dbReference type="Rhea" id="RHEA:26333"/>
        <dbReference type="Rhea" id="RHEA-COMP:12202"/>
        <dbReference type="Rhea" id="RHEA-COMP:19907"/>
        <dbReference type="ChEBI" id="CHEBI:15377"/>
        <dbReference type="ChEBI" id="CHEBI:15378"/>
        <dbReference type="ChEBI" id="CHEBI:58698"/>
        <dbReference type="ChEBI" id="CHEBI:59648"/>
        <dbReference type="ChEBI" id="CHEBI:90778"/>
        <dbReference type="ChEBI" id="CHEBI:232372"/>
        <dbReference type="EC" id="2.8.1.12"/>
    </reaction>
</comment>
<comment type="pathway">
    <text evidence="1">Cofactor biosynthesis; molybdopterin biosynthesis.</text>
</comment>
<comment type="subunit">
    <text evidence="1">Heterotetramer; composed of 2 small (MOCS2A) and 2 large (MOCS2B) subunits.</text>
</comment>
<comment type="subcellular location">
    <subcellularLocation>
        <location evidence="1">Cytoplasm</location>
    </subcellularLocation>
</comment>
<comment type="similarity">
    <text evidence="1">Belongs to the MoaE family. MOCS2B subfamily.</text>
</comment>
<organism>
    <name type="scientific">Pyrenophora tritici-repentis (strain Pt-1C-BFP)</name>
    <name type="common">Wheat tan spot fungus</name>
    <name type="synonym">Drechslera tritici-repentis</name>
    <dbReference type="NCBI Taxonomy" id="426418"/>
    <lineage>
        <taxon>Eukaryota</taxon>
        <taxon>Fungi</taxon>
        <taxon>Dikarya</taxon>
        <taxon>Ascomycota</taxon>
        <taxon>Pezizomycotina</taxon>
        <taxon>Dothideomycetes</taxon>
        <taxon>Pleosporomycetidae</taxon>
        <taxon>Pleosporales</taxon>
        <taxon>Pleosporineae</taxon>
        <taxon>Pleosporaceae</taxon>
        <taxon>Pyrenophora</taxon>
    </lineage>
</organism>
<accession>B2WBW4</accession>
<gene>
    <name evidence="1" type="primary">cnxH</name>
    <name type="ORF">PTRG_07127</name>
</gene>
<reference key="1">
    <citation type="journal article" date="2013" name="G3 (Bethesda)">
        <title>Comparative genomics of a plant-pathogenic fungus, Pyrenophora tritici-repentis, reveals transduplication and the impact of repeat elements on pathogenicity and population divergence.</title>
        <authorList>
            <person name="Manning V.A."/>
            <person name="Pandelova I."/>
            <person name="Dhillon B."/>
            <person name="Wilhelm L.J."/>
            <person name="Goodwin S.B."/>
            <person name="Berlin A.M."/>
            <person name="Figueroa M."/>
            <person name="Freitag M."/>
            <person name="Hane J.K."/>
            <person name="Henrissat B."/>
            <person name="Holman W.H."/>
            <person name="Kodira C.D."/>
            <person name="Martin J."/>
            <person name="Oliver R.P."/>
            <person name="Robbertse B."/>
            <person name="Schackwitz W."/>
            <person name="Schwartz D.C."/>
            <person name="Spatafora J.W."/>
            <person name="Turgeon B.G."/>
            <person name="Yandava C."/>
            <person name="Young S."/>
            <person name="Zhou S."/>
            <person name="Zeng Q."/>
            <person name="Grigoriev I.V."/>
            <person name="Ma L.-J."/>
            <person name="Ciuffetti L.M."/>
        </authorList>
    </citation>
    <scope>NUCLEOTIDE SEQUENCE [LARGE SCALE GENOMIC DNA]</scope>
    <source>
        <strain>Pt-1C-BFP</strain>
    </source>
</reference>
<sequence length="180" mass="19609">MSTTESQSYTADIPSERVVKTTDTIHVELTPHDLDSLAATRFVRSPSAGATVLFIGTTRDSFNNEPVSSLAYTSYTPLAISTLFKIATSILAKHSCTKIAIIHKLGECPIGEESIVIAVSAPHRQAAWRAGEETLEETKDRAEIWKLERFKGGEGVWRANRDGQKGVKVEGGKEGVEAKH</sequence>
<proteinExistence type="inferred from homology"/>
<evidence type="ECO:0000255" key="1">
    <source>
        <dbReference type="HAMAP-Rule" id="MF_03052"/>
    </source>
</evidence>
<evidence type="ECO:0000256" key="2">
    <source>
        <dbReference type="SAM" id="MobiDB-lite"/>
    </source>
</evidence>
<name>MOC2B_PYRTR</name>
<keyword id="KW-0963">Cytoplasm</keyword>
<keyword id="KW-0501">Molybdenum cofactor biosynthesis</keyword>
<keyword id="KW-1185">Reference proteome</keyword>
<keyword id="KW-0808">Transferase</keyword>
<feature type="chain" id="PRO_0000369360" description="Molybdopterin synthase catalytic subunit">
    <location>
        <begin position="1"/>
        <end position="180"/>
    </location>
</feature>
<feature type="region of interest" description="Disordered" evidence="2">
    <location>
        <begin position="161"/>
        <end position="180"/>
    </location>
</feature>
<feature type="binding site" evidence="1">
    <location>
        <begin position="123"/>
        <end position="124"/>
    </location>
    <ligand>
        <name>substrate</name>
    </ligand>
</feature>
<feature type="binding site" evidence="1">
    <location>
        <position position="139"/>
    </location>
    <ligand>
        <name>substrate</name>
    </ligand>
</feature>
<feature type="binding site" evidence="1">
    <location>
        <begin position="146"/>
        <end position="148"/>
    </location>
    <ligand>
        <name>substrate</name>
    </ligand>
</feature>